<feature type="chain" id="PRO_1000063128" description="Imidazole glycerol phosphate synthase subunit HisF">
    <location>
        <begin position="1"/>
        <end position="255"/>
    </location>
</feature>
<feature type="active site" evidence="1">
    <location>
        <position position="11"/>
    </location>
</feature>
<feature type="active site" evidence="1">
    <location>
        <position position="130"/>
    </location>
</feature>
<evidence type="ECO:0000255" key="1">
    <source>
        <dbReference type="HAMAP-Rule" id="MF_01013"/>
    </source>
</evidence>
<reference key="1">
    <citation type="submission" date="2006-01" db="EMBL/GenBank/DDBJ databases">
        <title>Complete sequence of Rhodopseudomonas palustris HaA2.</title>
        <authorList>
            <consortium name="US DOE Joint Genome Institute"/>
            <person name="Copeland A."/>
            <person name="Lucas S."/>
            <person name="Lapidus A."/>
            <person name="Barry K."/>
            <person name="Detter J.C."/>
            <person name="Glavina T."/>
            <person name="Hammon N."/>
            <person name="Israni S."/>
            <person name="Pitluck S."/>
            <person name="Chain P."/>
            <person name="Malfatti S."/>
            <person name="Shin M."/>
            <person name="Vergez L."/>
            <person name="Schmutz J."/>
            <person name="Larimer F."/>
            <person name="Land M."/>
            <person name="Hauser L."/>
            <person name="Pelletier D.A."/>
            <person name="Kyrpides N."/>
            <person name="Anderson I."/>
            <person name="Oda Y."/>
            <person name="Harwood C.S."/>
            <person name="Richardson P."/>
        </authorList>
    </citation>
    <scope>NUCLEOTIDE SEQUENCE [LARGE SCALE GENOMIC DNA]</scope>
    <source>
        <strain>HaA2</strain>
    </source>
</reference>
<name>HIS6_RHOP2</name>
<accession>Q2J340</accession>
<protein>
    <recommendedName>
        <fullName evidence="1">Imidazole glycerol phosphate synthase subunit HisF</fullName>
        <ecNumber evidence="1">4.3.2.10</ecNumber>
    </recommendedName>
    <alternativeName>
        <fullName evidence="1">IGP synthase cyclase subunit</fullName>
    </alternativeName>
    <alternativeName>
        <fullName evidence="1">IGP synthase subunit HisF</fullName>
    </alternativeName>
    <alternativeName>
        <fullName evidence="1">ImGP synthase subunit HisF</fullName>
        <shortName evidence="1">IGPS subunit HisF</shortName>
    </alternativeName>
</protein>
<gene>
    <name evidence="1" type="primary">hisF</name>
    <name type="ordered locus">RPB_0409</name>
</gene>
<proteinExistence type="inferred from homology"/>
<dbReference type="EC" id="4.3.2.10" evidence="1"/>
<dbReference type="EMBL" id="CP000250">
    <property type="protein sequence ID" value="ABD05120.1"/>
    <property type="molecule type" value="Genomic_DNA"/>
</dbReference>
<dbReference type="RefSeq" id="WP_011439310.1">
    <property type="nucleotide sequence ID" value="NC_007778.1"/>
</dbReference>
<dbReference type="SMR" id="Q2J340"/>
<dbReference type="STRING" id="316058.RPB_0409"/>
<dbReference type="KEGG" id="rpb:RPB_0409"/>
<dbReference type="eggNOG" id="COG0107">
    <property type="taxonomic scope" value="Bacteria"/>
</dbReference>
<dbReference type="HOGENOM" id="CLU_048577_4_0_5"/>
<dbReference type="OrthoDB" id="9781903at2"/>
<dbReference type="UniPathway" id="UPA00031">
    <property type="reaction ID" value="UER00010"/>
</dbReference>
<dbReference type="Proteomes" id="UP000008809">
    <property type="component" value="Chromosome"/>
</dbReference>
<dbReference type="GO" id="GO:0005737">
    <property type="term" value="C:cytoplasm"/>
    <property type="evidence" value="ECO:0007669"/>
    <property type="project" value="UniProtKB-SubCell"/>
</dbReference>
<dbReference type="GO" id="GO:0000107">
    <property type="term" value="F:imidazoleglycerol-phosphate synthase activity"/>
    <property type="evidence" value="ECO:0007669"/>
    <property type="project" value="UniProtKB-UniRule"/>
</dbReference>
<dbReference type="GO" id="GO:0016829">
    <property type="term" value="F:lyase activity"/>
    <property type="evidence" value="ECO:0007669"/>
    <property type="project" value="UniProtKB-KW"/>
</dbReference>
<dbReference type="GO" id="GO:0000105">
    <property type="term" value="P:L-histidine biosynthetic process"/>
    <property type="evidence" value="ECO:0007669"/>
    <property type="project" value="UniProtKB-UniRule"/>
</dbReference>
<dbReference type="CDD" id="cd04731">
    <property type="entry name" value="HisF"/>
    <property type="match status" value="1"/>
</dbReference>
<dbReference type="FunFam" id="3.20.20.70:FF:000006">
    <property type="entry name" value="Imidazole glycerol phosphate synthase subunit HisF"/>
    <property type="match status" value="1"/>
</dbReference>
<dbReference type="Gene3D" id="3.20.20.70">
    <property type="entry name" value="Aldolase class I"/>
    <property type="match status" value="1"/>
</dbReference>
<dbReference type="HAMAP" id="MF_01013">
    <property type="entry name" value="HisF"/>
    <property type="match status" value="1"/>
</dbReference>
<dbReference type="InterPro" id="IPR013785">
    <property type="entry name" value="Aldolase_TIM"/>
</dbReference>
<dbReference type="InterPro" id="IPR006062">
    <property type="entry name" value="His_biosynth"/>
</dbReference>
<dbReference type="InterPro" id="IPR004651">
    <property type="entry name" value="HisF"/>
</dbReference>
<dbReference type="InterPro" id="IPR050064">
    <property type="entry name" value="IGPS_HisA/HisF"/>
</dbReference>
<dbReference type="InterPro" id="IPR011060">
    <property type="entry name" value="RibuloseP-bd_barrel"/>
</dbReference>
<dbReference type="NCBIfam" id="TIGR00735">
    <property type="entry name" value="hisF"/>
    <property type="match status" value="1"/>
</dbReference>
<dbReference type="PANTHER" id="PTHR21235:SF2">
    <property type="entry name" value="IMIDAZOLE GLYCEROL PHOSPHATE SYNTHASE HISHF"/>
    <property type="match status" value="1"/>
</dbReference>
<dbReference type="PANTHER" id="PTHR21235">
    <property type="entry name" value="IMIDAZOLE GLYCEROL PHOSPHATE SYNTHASE SUBUNIT HISF/H IGP SYNTHASE SUBUNIT HISF/H"/>
    <property type="match status" value="1"/>
</dbReference>
<dbReference type="Pfam" id="PF00977">
    <property type="entry name" value="His_biosynth"/>
    <property type="match status" value="1"/>
</dbReference>
<dbReference type="SUPFAM" id="SSF51366">
    <property type="entry name" value="Ribulose-phoshate binding barrel"/>
    <property type="match status" value="1"/>
</dbReference>
<sequence length="255" mass="27388">MFKVRVIPCLDVKDGRVVKGVNFVDLRDAGDPVEAAIAYDAAGADELCFLDITATHENRGIMLDVVRRTAEACFMPVTVGGGVRTVDDIKTLLRSGADKVSINSAAVARREFVKEAAEKFGDQCIVVAIDAKRVPGRDRWEIFTHGGRKGTGIDAIEFAQEVVSLGAGEILLTSMDRDGTRSGFDLPLTRAIADSIQVPVIASGGVGNLDHLVDGIRDGHATAVLAASIFHFGEYTIRQAKDHMVRCGLPMRLDP</sequence>
<organism>
    <name type="scientific">Rhodopseudomonas palustris (strain HaA2)</name>
    <dbReference type="NCBI Taxonomy" id="316058"/>
    <lineage>
        <taxon>Bacteria</taxon>
        <taxon>Pseudomonadati</taxon>
        <taxon>Pseudomonadota</taxon>
        <taxon>Alphaproteobacteria</taxon>
        <taxon>Hyphomicrobiales</taxon>
        <taxon>Nitrobacteraceae</taxon>
        <taxon>Rhodopseudomonas</taxon>
    </lineage>
</organism>
<keyword id="KW-0028">Amino-acid biosynthesis</keyword>
<keyword id="KW-0963">Cytoplasm</keyword>
<keyword id="KW-0368">Histidine biosynthesis</keyword>
<keyword id="KW-0456">Lyase</keyword>
<keyword id="KW-1185">Reference proteome</keyword>
<comment type="function">
    <text evidence="1">IGPS catalyzes the conversion of PRFAR and glutamine to IGP, AICAR and glutamate. The HisF subunit catalyzes the cyclization activity that produces IGP and AICAR from PRFAR using the ammonia provided by the HisH subunit.</text>
</comment>
<comment type="catalytic activity">
    <reaction evidence="1">
        <text>5-[(5-phospho-1-deoxy-D-ribulos-1-ylimino)methylamino]-1-(5-phospho-beta-D-ribosyl)imidazole-4-carboxamide + L-glutamine = D-erythro-1-(imidazol-4-yl)glycerol 3-phosphate + 5-amino-1-(5-phospho-beta-D-ribosyl)imidazole-4-carboxamide + L-glutamate + H(+)</text>
        <dbReference type="Rhea" id="RHEA:24793"/>
        <dbReference type="ChEBI" id="CHEBI:15378"/>
        <dbReference type="ChEBI" id="CHEBI:29985"/>
        <dbReference type="ChEBI" id="CHEBI:58278"/>
        <dbReference type="ChEBI" id="CHEBI:58359"/>
        <dbReference type="ChEBI" id="CHEBI:58475"/>
        <dbReference type="ChEBI" id="CHEBI:58525"/>
        <dbReference type="EC" id="4.3.2.10"/>
    </reaction>
</comment>
<comment type="pathway">
    <text evidence="1">Amino-acid biosynthesis; L-histidine biosynthesis; L-histidine from 5-phospho-alpha-D-ribose 1-diphosphate: step 5/9.</text>
</comment>
<comment type="subunit">
    <text evidence="1">Heterodimer of HisH and HisF.</text>
</comment>
<comment type="subcellular location">
    <subcellularLocation>
        <location evidence="1">Cytoplasm</location>
    </subcellularLocation>
</comment>
<comment type="similarity">
    <text evidence="1">Belongs to the HisA/HisF family.</text>
</comment>